<proteinExistence type="evidence at transcript level"/>
<dbReference type="EC" id="5.3.1.9" evidence="3"/>
<dbReference type="EMBL" id="Z37977">
    <property type="protein sequence ID" value="CAA86031.1"/>
    <property type="molecule type" value="mRNA"/>
</dbReference>
<dbReference type="PIR" id="I48073">
    <property type="entry name" value="I48073"/>
</dbReference>
<dbReference type="RefSeq" id="NP_001233655.1">
    <property type="nucleotide sequence ID" value="NM_001246726.1"/>
</dbReference>
<dbReference type="SMR" id="P50309"/>
<dbReference type="PaxDb" id="10029-NP_001233655.1"/>
<dbReference type="Ensembl" id="ENSCGRT00001002419.1">
    <property type="protein sequence ID" value="ENSCGRP00001001962.1"/>
    <property type="gene ID" value="ENSCGRG00001001963.1"/>
</dbReference>
<dbReference type="GeneID" id="100689468"/>
<dbReference type="KEGG" id="cge:100689468"/>
<dbReference type="CTD" id="2821"/>
<dbReference type="eggNOG" id="KOG2446">
    <property type="taxonomic scope" value="Eukaryota"/>
</dbReference>
<dbReference type="GeneTree" id="ENSGT00390000000707"/>
<dbReference type="OrthoDB" id="5831190at2759"/>
<dbReference type="UniPathway" id="UPA00109">
    <property type="reaction ID" value="UER00181"/>
</dbReference>
<dbReference type="Proteomes" id="UP000694386">
    <property type="component" value="Unplaced"/>
</dbReference>
<dbReference type="Proteomes" id="UP001108280">
    <property type="component" value="Chromosome 9"/>
</dbReference>
<dbReference type="GO" id="GO:0060170">
    <property type="term" value="C:ciliary membrane"/>
    <property type="evidence" value="ECO:0007669"/>
    <property type="project" value="Ensembl"/>
</dbReference>
<dbReference type="GO" id="GO:0005829">
    <property type="term" value="C:cytosol"/>
    <property type="evidence" value="ECO:0007669"/>
    <property type="project" value="Ensembl"/>
</dbReference>
<dbReference type="GO" id="GO:0005615">
    <property type="term" value="C:extracellular space"/>
    <property type="evidence" value="ECO:0007669"/>
    <property type="project" value="UniProtKB-KW"/>
</dbReference>
<dbReference type="GO" id="GO:0097367">
    <property type="term" value="F:carbohydrate derivative binding"/>
    <property type="evidence" value="ECO:0007669"/>
    <property type="project" value="InterPro"/>
</dbReference>
<dbReference type="GO" id="GO:0005125">
    <property type="term" value="F:cytokine activity"/>
    <property type="evidence" value="ECO:0007669"/>
    <property type="project" value="UniProtKB-KW"/>
</dbReference>
<dbReference type="GO" id="GO:0004347">
    <property type="term" value="F:glucose-6-phosphate isomerase activity"/>
    <property type="evidence" value="ECO:0000250"/>
    <property type="project" value="UniProtKB"/>
</dbReference>
<dbReference type="GO" id="GO:0048029">
    <property type="term" value="F:monosaccharide binding"/>
    <property type="evidence" value="ECO:0007669"/>
    <property type="project" value="TreeGrafter"/>
</dbReference>
<dbReference type="GO" id="GO:0031625">
    <property type="term" value="F:ubiquitin protein ligase binding"/>
    <property type="evidence" value="ECO:0007669"/>
    <property type="project" value="Ensembl"/>
</dbReference>
<dbReference type="GO" id="GO:0061621">
    <property type="term" value="P:canonical glycolysis"/>
    <property type="evidence" value="ECO:0007669"/>
    <property type="project" value="Ensembl"/>
</dbReference>
<dbReference type="GO" id="GO:0034101">
    <property type="term" value="P:erythrocyte homeostasis"/>
    <property type="evidence" value="ECO:0007669"/>
    <property type="project" value="Ensembl"/>
</dbReference>
<dbReference type="GO" id="GO:0006002">
    <property type="term" value="P:fructose 6-phosphate metabolic process"/>
    <property type="evidence" value="ECO:0007669"/>
    <property type="project" value="Ensembl"/>
</dbReference>
<dbReference type="GO" id="GO:0006094">
    <property type="term" value="P:gluconeogenesis"/>
    <property type="evidence" value="ECO:0007669"/>
    <property type="project" value="UniProtKB-KW"/>
</dbReference>
<dbReference type="GO" id="GO:0051156">
    <property type="term" value="P:glucose 6-phosphate metabolic process"/>
    <property type="evidence" value="ECO:0000250"/>
    <property type="project" value="UniProtKB"/>
</dbReference>
<dbReference type="GO" id="GO:0042593">
    <property type="term" value="P:glucose homeostasis"/>
    <property type="evidence" value="ECO:0007669"/>
    <property type="project" value="Ensembl"/>
</dbReference>
<dbReference type="GO" id="GO:0001701">
    <property type="term" value="P:in utero embryonic development"/>
    <property type="evidence" value="ECO:0007669"/>
    <property type="project" value="Ensembl"/>
</dbReference>
<dbReference type="GO" id="GO:0001707">
    <property type="term" value="P:mesoderm formation"/>
    <property type="evidence" value="ECO:0007669"/>
    <property type="project" value="Ensembl"/>
</dbReference>
<dbReference type="GO" id="GO:0010595">
    <property type="term" value="P:positive regulation of endothelial cell migration"/>
    <property type="evidence" value="ECO:0007669"/>
    <property type="project" value="Ensembl"/>
</dbReference>
<dbReference type="GO" id="GO:0002639">
    <property type="term" value="P:positive regulation of immunoglobulin production"/>
    <property type="evidence" value="ECO:0007669"/>
    <property type="project" value="Ensembl"/>
</dbReference>
<dbReference type="CDD" id="cd05015">
    <property type="entry name" value="SIS_PGI_1"/>
    <property type="match status" value="1"/>
</dbReference>
<dbReference type="CDD" id="cd05016">
    <property type="entry name" value="SIS_PGI_2"/>
    <property type="match status" value="1"/>
</dbReference>
<dbReference type="FunFam" id="1.10.1390.10:FF:000001">
    <property type="entry name" value="Glucose-6-phosphate isomerase"/>
    <property type="match status" value="1"/>
</dbReference>
<dbReference type="FunFam" id="3.40.50.10490:FF:000004">
    <property type="entry name" value="Glucose-6-phosphate isomerase"/>
    <property type="match status" value="1"/>
</dbReference>
<dbReference type="FunFam" id="3.40.50.10490:FF:000093">
    <property type="entry name" value="Glucose-6-phosphate isomerase"/>
    <property type="match status" value="1"/>
</dbReference>
<dbReference type="Gene3D" id="1.10.1390.10">
    <property type="match status" value="1"/>
</dbReference>
<dbReference type="Gene3D" id="3.40.50.10490">
    <property type="entry name" value="Glucose-6-phosphate isomerase like protein, domain 1"/>
    <property type="match status" value="2"/>
</dbReference>
<dbReference type="HAMAP" id="MF_00473">
    <property type="entry name" value="G6P_isomerase"/>
    <property type="match status" value="1"/>
</dbReference>
<dbReference type="InterPro" id="IPR001672">
    <property type="entry name" value="G6P_Isomerase"/>
</dbReference>
<dbReference type="InterPro" id="IPR023096">
    <property type="entry name" value="G6P_Isomerase_C"/>
</dbReference>
<dbReference type="InterPro" id="IPR018189">
    <property type="entry name" value="Phosphoglucose_isomerase_CS"/>
</dbReference>
<dbReference type="InterPro" id="IPR046348">
    <property type="entry name" value="SIS_dom_sf"/>
</dbReference>
<dbReference type="InterPro" id="IPR035476">
    <property type="entry name" value="SIS_PGI_1"/>
</dbReference>
<dbReference type="InterPro" id="IPR035482">
    <property type="entry name" value="SIS_PGI_2"/>
</dbReference>
<dbReference type="NCBIfam" id="NF001211">
    <property type="entry name" value="PRK00179.1"/>
    <property type="match status" value="1"/>
</dbReference>
<dbReference type="PANTHER" id="PTHR11469">
    <property type="entry name" value="GLUCOSE-6-PHOSPHATE ISOMERASE"/>
    <property type="match status" value="1"/>
</dbReference>
<dbReference type="PANTHER" id="PTHR11469:SF1">
    <property type="entry name" value="GLUCOSE-6-PHOSPHATE ISOMERASE"/>
    <property type="match status" value="1"/>
</dbReference>
<dbReference type="Pfam" id="PF00342">
    <property type="entry name" value="PGI"/>
    <property type="match status" value="1"/>
</dbReference>
<dbReference type="PRINTS" id="PR00662">
    <property type="entry name" value="G6PISOMERASE"/>
</dbReference>
<dbReference type="SUPFAM" id="SSF53697">
    <property type="entry name" value="SIS domain"/>
    <property type="match status" value="1"/>
</dbReference>
<dbReference type="PROSITE" id="PS00765">
    <property type="entry name" value="P_GLUCOSE_ISOMERASE_1"/>
    <property type="match status" value="1"/>
</dbReference>
<dbReference type="PROSITE" id="PS00174">
    <property type="entry name" value="P_GLUCOSE_ISOMERASE_2"/>
    <property type="match status" value="1"/>
</dbReference>
<dbReference type="PROSITE" id="PS51463">
    <property type="entry name" value="P_GLUCOSE_ISOMERASE_3"/>
    <property type="match status" value="1"/>
</dbReference>
<accession>P50309</accession>
<comment type="function">
    <text evidence="2 3">In the cytoplasm, catalyzes the conversion of glucose-6-phosphate to fructose-6-phosphate, the second step in glycolysis, and the reverse reaction during gluconeogenesis (By similarity). Besides it's role as a glycolytic enzyme, also acts as a secreted cytokine: acts as an angiogenic factor (AMF) that stimulates endothelial cell motility. Acts as a neurotrophic factor, neuroleukin, for spinal and sensory neurons. It is secreted by lectin-stimulated T-cells and induces immunoglobulin secretion (By similarity).</text>
</comment>
<comment type="catalytic activity">
    <reaction evidence="2">
        <text>alpha-D-glucose 6-phosphate = beta-D-fructose 6-phosphate</text>
        <dbReference type="Rhea" id="RHEA:11816"/>
        <dbReference type="ChEBI" id="CHEBI:57634"/>
        <dbReference type="ChEBI" id="CHEBI:58225"/>
        <dbReference type="EC" id="5.3.1.9"/>
    </reaction>
</comment>
<comment type="pathway">
    <text evidence="2">Carbohydrate degradation; glycolysis; D-glyceraldehyde 3-phosphate and glycerone phosphate from D-glucose: step 2/4.</text>
</comment>
<comment type="subunit">
    <text evidence="2">Homodimer; in the catalytically active form. Monomer in the secreted form.</text>
</comment>
<comment type="subcellular location">
    <subcellularLocation>
        <location evidence="2">Cytoplasm</location>
    </subcellularLocation>
    <subcellularLocation>
        <location evidence="2">Secreted</location>
    </subcellularLocation>
</comment>
<comment type="PTM">
    <text evidence="2">Phosphorylation at Ser-185 by CK2 has been shown to decrease enzymatic activity and may contribute to secretion by a non-classical secretory pathway.</text>
</comment>
<comment type="PTM">
    <text evidence="2">ISGylated.</text>
</comment>
<comment type="similarity">
    <text evidence="6">Belongs to the GPI family.</text>
</comment>
<feature type="chain" id="PRO_0000180536" description="Glucose-6-phosphate isomerase">
    <location>
        <begin position="1"/>
        <end position="558"/>
    </location>
</feature>
<feature type="active site" description="Proton donor" evidence="3">
    <location>
        <position position="358"/>
    </location>
</feature>
<feature type="active site" evidence="3">
    <location>
        <position position="389"/>
    </location>
</feature>
<feature type="active site" evidence="3">
    <location>
        <position position="519"/>
    </location>
</feature>
<feature type="binding site" evidence="3">
    <location>
        <begin position="159"/>
        <end position="160"/>
    </location>
    <ligand>
        <name>D-glucose 6-phosphate</name>
        <dbReference type="ChEBI" id="CHEBI:61548"/>
    </ligand>
</feature>
<feature type="binding site" evidence="3">
    <location>
        <begin position="210"/>
        <end position="215"/>
    </location>
    <ligand>
        <name>D-glucose 6-phosphate</name>
        <dbReference type="ChEBI" id="CHEBI:61548"/>
    </ligand>
</feature>
<feature type="binding site" evidence="3">
    <location>
        <position position="354"/>
    </location>
    <ligand>
        <name>D-glucose 6-phosphate</name>
        <dbReference type="ChEBI" id="CHEBI:61548"/>
    </ligand>
</feature>
<feature type="binding site" evidence="3">
    <location>
        <position position="358"/>
    </location>
    <ligand>
        <name>D-glucose 6-phosphate</name>
        <dbReference type="ChEBI" id="CHEBI:61548"/>
    </ligand>
</feature>
<feature type="binding site" evidence="3">
    <location>
        <position position="389"/>
    </location>
    <ligand>
        <name>D-glucose 6-phosphate</name>
        <dbReference type="ChEBI" id="CHEBI:61548"/>
    </ligand>
</feature>
<feature type="binding site" evidence="3">
    <location>
        <position position="519"/>
    </location>
    <ligand>
        <name>D-glucose 6-phosphate</name>
        <dbReference type="ChEBI" id="CHEBI:61548"/>
    </ligand>
</feature>
<feature type="modified residue" description="N6-acetyllysine" evidence="2">
    <location>
        <position position="12"/>
    </location>
</feature>
<feature type="modified residue" description="Phosphoserine" evidence="4">
    <location>
        <position position="86"/>
    </location>
</feature>
<feature type="modified residue" description="Phosphoserine" evidence="2">
    <location>
        <position position="107"/>
    </location>
</feature>
<feature type="modified residue" description="N6-acetyllysine" evidence="2">
    <location>
        <position position="142"/>
    </location>
</feature>
<feature type="modified residue" description="Phosphoserine; by CK2" evidence="2">
    <location>
        <position position="185"/>
    </location>
</feature>
<feature type="modified residue" description="Phosphothreonine" evidence="4">
    <location>
        <position position="250"/>
    </location>
</feature>
<feature type="modified residue" description="N6-acetyllysine; alternate" evidence="3">
    <location>
        <position position="454"/>
    </location>
</feature>
<feature type="modified residue" description="N6-malonyllysine; alternate" evidence="1">
    <location>
        <position position="454"/>
    </location>
</feature>
<feature type="modified residue" description="N6-succinyllysine; alternate" evidence="3">
    <location>
        <position position="454"/>
    </location>
</feature>
<feature type="modified residue" description="Phosphoserine" evidence="2">
    <location>
        <position position="455"/>
    </location>
</feature>
<protein>
    <recommendedName>
        <fullName evidence="5">Glucose-6-phosphate isomerase</fullName>
        <shortName evidence="5">GPI</shortName>
        <ecNumber evidence="3">5.3.1.9</ecNumber>
    </recommendedName>
    <alternativeName>
        <fullName evidence="2">Autocrine motility factor</fullName>
        <shortName evidence="2">AMF</shortName>
    </alternativeName>
    <alternativeName>
        <fullName evidence="2">Neuroleukin</fullName>
        <shortName evidence="2">NLK</shortName>
    </alternativeName>
    <alternativeName>
        <fullName evidence="2">Phosphoglucose isomerase</fullName>
        <shortName evidence="2">PGI</shortName>
    </alternativeName>
    <alternativeName>
        <fullName>Phosphohexose isomerase</fullName>
        <shortName evidence="2">PHI</shortName>
    </alternativeName>
</protein>
<name>G6PI_CRIGR</name>
<sequence>MTSLTQNRYFQKLQDWHRDNSADINLRSLFDADPERFNNFSLNLNTTHGHILVDYSKNLVNKEVMQMLVDLARSRGVETMRDNMFSGVKINYTEDRAVLHVALRNRSNSPIVVDSRDVMPEVNRVLEKMRSFCQRVRSGEWKGYSGKPITDIVNIGIGGSDLGPLMVTEALKPYASGGPRIWFVSNIDGTHIAKTLANLTPESSLFIVASKTFTTQETITNAETAKEWFLGASRDPSTVAKHFIALSTNTSKVKEFGIDPQNMFEFWDWVGGRYSLWSAIGLSIALHIGFDNFEQLLSGAHWMDQHFRKTPLEKNAPVLLALLGIWYINFYGCETHALLPYDQYMHRFAAYFQQGDMESNGKSITRSGTRVDHHTGPIVWGEPGTNGQHAFYQLIHQGTKMIPCDFLIPVQTQHPIRKGLHHKILLANFLAQTEALMKGKSNEEAKKELQAAGKSPEDLEKLLPHKVFEGNRPTNSIVFTKLTPFILGALIALYEHKIFVQGVIWDINSFDQWGVELGKQLAKNIEPELDGSAPVTSHDSSTNGLIKFIKQQRDIRIE</sequence>
<keyword id="KW-0007">Acetylation</keyword>
<keyword id="KW-0202">Cytokine</keyword>
<keyword id="KW-0963">Cytoplasm</keyword>
<keyword id="KW-0312">Gluconeogenesis</keyword>
<keyword id="KW-0324">Glycolysis</keyword>
<keyword id="KW-0413">Isomerase</keyword>
<keyword id="KW-0597">Phosphoprotein</keyword>
<keyword id="KW-0964">Secreted</keyword>
<keyword id="KW-0832">Ubl conjugation</keyword>
<evidence type="ECO:0000250" key="1"/>
<evidence type="ECO:0000250" key="2">
    <source>
        <dbReference type="UniProtKB" id="P06744"/>
    </source>
</evidence>
<evidence type="ECO:0000250" key="3">
    <source>
        <dbReference type="UniProtKB" id="P06745"/>
    </source>
</evidence>
<evidence type="ECO:0000250" key="4">
    <source>
        <dbReference type="UniProtKB" id="Q6P6V0"/>
    </source>
</evidence>
<evidence type="ECO:0000303" key="5">
    <source>
    </source>
</evidence>
<evidence type="ECO:0000305" key="6"/>
<reference key="1">
    <citation type="journal article" date="1995" name="Somat. Cell Mol. Genet.">
        <title>Characterization of cDNAs coding for glucose phosphate isomerase and phosphoglycerate kinase in Chinese hamster ovary cell line CHO-K1 and identification of defects in R1.1.7, a glycolysis-deficient variant of CHO-K1.</title>
        <authorList>
            <person name="Hassan A.F."/>
            <person name="Morgan M.J."/>
            <person name="Faik P."/>
        </authorList>
    </citation>
    <scope>NUCLEOTIDE SEQUENCE [MRNA]</scope>
    <source>
        <tissue>Ovary</tissue>
    </source>
</reference>
<organism>
    <name type="scientific">Cricetulus griseus</name>
    <name type="common">Chinese hamster</name>
    <name type="synonym">Cricetulus barabensis griseus</name>
    <dbReference type="NCBI Taxonomy" id="10029"/>
    <lineage>
        <taxon>Eukaryota</taxon>
        <taxon>Metazoa</taxon>
        <taxon>Chordata</taxon>
        <taxon>Craniata</taxon>
        <taxon>Vertebrata</taxon>
        <taxon>Euteleostomi</taxon>
        <taxon>Mammalia</taxon>
        <taxon>Eutheria</taxon>
        <taxon>Euarchontoglires</taxon>
        <taxon>Glires</taxon>
        <taxon>Rodentia</taxon>
        <taxon>Myomorpha</taxon>
        <taxon>Muroidea</taxon>
        <taxon>Cricetidae</taxon>
        <taxon>Cricetinae</taxon>
        <taxon>Cricetulus</taxon>
    </lineage>
</organism>
<gene>
    <name evidence="5" type="primary">GPI</name>
</gene>